<comment type="function">
    <text evidence="1 3">Dermonecrotic toxins cleave the phosphodiester linkage between the phosphate and headgroup of certain phospholipids (sphingolipid and lysolipid substrates), forming an alcohol (often choline) and a cyclic phosphate (By similarity). This toxin acts on sphingomyelin (SM) (By similarity). It may also act on ceramide phosphoethanolamine (CPE), lysophosphatidylcholine (LPC) and lysophosphatidylethanolamine (LPE), but not on lysophosphatidylserine (LPS), and lysophosphatidylglycerol (LPG) (By similarity). It acts by transphosphatidylation, releasing exclusively cyclic phosphate products as second products (By similarity). Induces dermonecrosis, hemolysis, increased vascular permeability, edema, inflammatory response, and platelet aggregation (By similarity).</text>
</comment>
<comment type="catalytic activity">
    <reaction evidence="1">
        <text>an N-(acyl)-sphingosylphosphocholine = an N-(acyl)-sphingosyl-1,3-cyclic phosphate + choline</text>
        <dbReference type="Rhea" id="RHEA:60652"/>
        <dbReference type="ChEBI" id="CHEBI:15354"/>
        <dbReference type="ChEBI" id="CHEBI:64583"/>
        <dbReference type="ChEBI" id="CHEBI:143892"/>
    </reaction>
</comment>
<comment type="catalytic activity">
    <reaction evidence="1">
        <text>an N-(acyl)-sphingosylphosphoethanolamine = an N-(acyl)-sphingosyl-1,3-cyclic phosphate + ethanolamine</text>
        <dbReference type="Rhea" id="RHEA:60648"/>
        <dbReference type="ChEBI" id="CHEBI:57603"/>
        <dbReference type="ChEBI" id="CHEBI:143891"/>
        <dbReference type="ChEBI" id="CHEBI:143892"/>
    </reaction>
</comment>
<comment type="catalytic activity">
    <reaction evidence="1">
        <text>a 1-acyl-sn-glycero-3-phosphocholine = a 1-acyl-sn-glycero-2,3-cyclic phosphate + choline</text>
        <dbReference type="Rhea" id="RHEA:60700"/>
        <dbReference type="ChEBI" id="CHEBI:15354"/>
        <dbReference type="ChEBI" id="CHEBI:58168"/>
        <dbReference type="ChEBI" id="CHEBI:143947"/>
    </reaction>
</comment>
<comment type="catalytic activity">
    <reaction evidence="1">
        <text>a 1-acyl-sn-glycero-3-phosphoethanolamine = a 1-acyl-sn-glycero-2,3-cyclic phosphate + ethanolamine</text>
        <dbReference type="Rhea" id="RHEA:60704"/>
        <dbReference type="ChEBI" id="CHEBI:57603"/>
        <dbReference type="ChEBI" id="CHEBI:64381"/>
        <dbReference type="ChEBI" id="CHEBI:143947"/>
    </reaction>
</comment>
<comment type="cofactor">
    <cofactor evidence="5">
        <name>Mg(2+)</name>
        <dbReference type="ChEBI" id="CHEBI:18420"/>
    </cofactor>
    <text evidence="5">Binds 1 Mg(2+) ion per subunit.</text>
</comment>
<comment type="subcellular location">
    <subcellularLocation>
        <location evidence="8">Secreted</location>
    </subcellularLocation>
</comment>
<comment type="tissue specificity">
    <text evidence="8">Expressed by the venom gland.</text>
</comment>
<comment type="similarity">
    <text evidence="7">Belongs to the arthropod phospholipase D family. Class II subfamily.</text>
</comment>
<comment type="caution">
    <text evidence="1 2 4">The most common activity assay for dermonecrotic toxins detects enzymatic activity by monitoring choline release from substrate. Liberation of choline from sphingomyelin (SM) or lysophosphatidylcholine (LPC) is commonly assumed to result from substrate hydrolysis, giving either ceramide-1-phosphate (C1P) or lysophosphatidic acid (LPA), respectively, as a second product. However, two studies from Lajoie and colleagues (2013 and 2015) report the observation of exclusive formation of cyclic phosphate products as second products, resulting from intramolecular transphosphatidylation. Cyclic phosphates have vastly different biological properties from their monoester counterparts, and they may be relevant to the pathology of brown spider envenomation.</text>
</comment>
<feature type="chain" id="PRO_0000392860" description="Dermonecrotic toxin LspiSicTox-betaIE2ii">
    <location>
        <begin position="1" status="less than"/>
        <end position="278"/>
    </location>
</feature>
<feature type="active site" evidence="5">
    <location>
        <position position="5"/>
    </location>
</feature>
<feature type="active site" description="Nucleophile" evidence="5">
    <location>
        <position position="41"/>
    </location>
</feature>
<feature type="binding site" evidence="5">
    <location>
        <position position="25"/>
    </location>
    <ligand>
        <name>Mg(2+)</name>
        <dbReference type="ChEBI" id="CHEBI:18420"/>
    </ligand>
</feature>
<feature type="binding site" evidence="5">
    <location>
        <position position="27"/>
    </location>
    <ligand>
        <name>Mg(2+)</name>
        <dbReference type="ChEBI" id="CHEBI:18420"/>
    </ligand>
</feature>
<feature type="binding site" evidence="5">
    <location>
        <position position="85"/>
    </location>
    <ligand>
        <name>Mg(2+)</name>
        <dbReference type="ChEBI" id="CHEBI:18420"/>
    </ligand>
</feature>
<feature type="disulfide bond" evidence="3">
    <location>
        <begin position="45"/>
        <end position="51"/>
    </location>
</feature>
<feature type="disulfide bond" evidence="3">
    <location>
        <begin position="47"/>
        <end position="190"/>
    </location>
</feature>
<feature type="non-terminal residue">
    <location>
        <position position="1"/>
    </location>
</feature>
<accession>C0JB42</accession>
<protein>
    <recommendedName>
        <fullName evidence="6">Dermonecrotic toxin LspiSicTox-betaIE2ii</fullName>
        <ecNumber evidence="4">4.6.1.-</ecNumber>
    </recommendedName>
    <alternativeName>
        <fullName>Phospholipase D</fullName>
        <shortName>PLD</shortName>
    </alternativeName>
    <alternativeName>
        <fullName>Sphingomyelin phosphodiesterase D</fullName>
        <shortName>SMD</shortName>
        <shortName>SMase D</shortName>
        <shortName>Sphingomyelinase D</shortName>
    </alternativeName>
</protein>
<sequence>FALAHMVNDFDIMKSYLDEGANGIETDITFSPEGEPESAFHGVPCDCKRWCDRTVSFDSYLQKTSDLSTPGHPDYRENLLIIILDLKLNGLSQDALANGGRRLADKLAAHFWTGGRRDQRATFVVSVPQTSQKVFMKTFREEMEAIGMGDMNAKVGFDFTDNGDVSVTKAVYDELGITEHIWASDGITNCVALLFRGTSRLEELIQKRDEGESTYISKVYAWTYDKETSVVLALELGVDGVMTNYADFVISILNKPEHSSKYRLATYEDDPFERFKAV</sequence>
<reference key="1">
    <citation type="journal article" date="2009" name="Mol. Biol. Evol.">
        <title>Molecular evolution, functional variation, and proposed nomenclature of the gene family that includes sphingomyelinase D in sicariid spider venoms.</title>
        <authorList>
            <person name="Binford G.J."/>
            <person name="Bodner M.R."/>
            <person name="Cordes M.H."/>
            <person name="Baldwin K.L."/>
            <person name="Rynerson M.R."/>
            <person name="Burns S.N."/>
            <person name="Zobel-Thropp P.A."/>
        </authorList>
    </citation>
    <scope>NUCLEOTIDE SEQUENCE [MRNA]</scope>
    <scope>NOMENCLATURE</scope>
    <source>
        <strain>Borakalalo</strain>
        <tissue>Venom gland</tissue>
    </source>
</reference>
<organism>
    <name type="scientific">Loxosceles spinulosa</name>
    <name type="common">Recluse spider</name>
    <dbReference type="NCBI Taxonomy" id="571532"/>
    <lineage>
        <taxon>Eukaryota</taxon>
        <taxon>Metazoa</taxon>
        <taxon>Ecdysozoa</taxon>
        <taxon>Arthropoda</taxon>
        <taxon>Chelicerata</taxon>
        <taxon>Arachnida</taxon>
        <taxon>Araneae</taxon>
        <taxon>Araneomorphae</taxon>
        <taxon>Haplogynae</taxon>
        <taxon>Scytodoidea</taxon>
        <taxon>Sicariidae</taxon>
        <taxon>Loxosceles</taxon>
    </lineage>
</organism>
<name>B1S2_LOXSN</name>
<proteinExistence type="evidence at transcript level"/>
<keyword id="KW-0204">Cytolysis</keyword>
<keyword id="KW-1061">Dermonecrotic toxin</keyword>
<keyword id="KW-1015">Disulfide bond</keyword>
<keyword id="KW-0354">Hemolysis</keyword>
<keyword id="KW-0442">Lipid degradation</keyword>
<keyword id="KW-0443">Lipid metabolism</keyword>
<keyword id="KW-0456">Lyase</keyword>
<keyword id="KW-0460">Magnesium</keyword>
<keyword id="KW-0479">Metal-binding</keyword>
<keyword id="KW-0964">Secreted</keyword>
<keyword id="KW-0800">Toxin</keyword>
<evidence type="ECO:0000250" key="1">
    <source>
        <dbReference type="UniProtKB" id="A0A0D4WTV1"/>
    </source>
</evidence>
<evidence type="ECO:0000250" key="2">
    <source>
        <dbReference type="UniProtKB" id="A0A0D4WV12"/>
    </source>
</evidence>
<evidence type="ECO:0000250" key="3">
    <source>
        <dbReference type="UniProtKB" id="P0CE80"/>
    </source>
</evidence>
<evidence type="ECO:0000250" key="4">
    <source>
        <dbReference type="UniProtKB" id="Q4ZFU2"/>
    </source>
</evidence>
<evidence type="ECO:0000250" key="5">
    <source>
        <dbReference type="UniProtKB" id="Q8I914"/>
    </source>
</evidence>
<evidence type="ECO:0000303" key="6">
    <source>
    </source>
</evidence>
<evidence type="ECO:0000305" key="7"/>
<evidence type="ECO:0000305" key="8">
    <source>
    </source>
</evidence>
<dbReference type="EC" id="4.6.1.-" evidence="4"/>
<dbReference type="EMBL" id="FJ171477">
    <property type="protein sequence ID" value="ACN48973.1"/>
    <property type="molecule type" value="mRNA"/>
</dbReference>
<dbReference type="SMR" id="C0JB42"/>
<dbReference type="GO" id="GO:0005576">
    <property type="term" value="C:extracellular region"/>
    <property type="evidence" value="ECO:0007669"/>
    <property type="project" value="UniProtKB-SubCell"/>
</dbReference>
<dbReference type="GO" id="GO:0016829">
    <property type="term" value="F:lyase activity"/>
    <property type="evidence" value="ECO:0007669"/>
    <property type="project" value="UniProtKB-KW"/>
</dbReference>
<dbReference type="GO" id="GO:0046872">
    <property type="term" value="F:metal ion binding"/>
    <property type="evidence" value="ECO:0007669"/>
    <property type="project" value="UniProtKB-KW"/>
</dbReference>
<dbReference type="GO" id="GO:0008081">
    <property type="term" value="F:phosphoric diester hydrolase activity"/>
    <property type="evidence" value="ECO:0007669"/>
    <property type="project" value="InterPro"/>
</dbReference>
<dbReference type="GO" id="GO:0090729">
    <property type="term" value="F:toxin activity"/>
    <property type="evidence" value="ECO:0007669"/>
    <property type="project" value="UniProtKB-KW"/>
</dbReference>
<dbReference type="GO" id="GO:0031640">
    <property type="term" value="P:killing of cells of another organism"/>
    <property type="evidence" value="ECO:0007669"/>
    <property type="project" value="UniProtKB-KW"/>
</dbReference>
<dbReference type="GO" id="GO:0016042">
    <property type="term" value="P:lipid catabolic process"/>
    <property type="evidence" value="ECO:0007669"/>
    <property type="project" value="UniProtKB-KW"/>
</dbReference>
<dbReference type="CDD" id="cd08576">
    <property type="entry name" value="GDPD_like_SMaseD_PLD"/>
    <property type="match status" value="1"/>
</dbReference>
<dbReference type="Gene3D" id="3.20.20.190">
    <property type="entry name" value="Phosphatidylinositol (PI) phosphodiesterase"/>
    <property type="match status" value="1"/>
</dbReference>
<dbReference type="InterPro" id="IPR017946">
    <property type="entry name" value="PLC-like_Pdiesterase_TIM-brl"/>
</dbReference>
<dbReference type="SUPFAM" id="SSF51695">
    <property type="entry name" value="PLC-like phosphodiesterases"/>
    <property type="match status" value="1"/>
</dbReference>